<protein>
    <recommendedName>
        <fullName evidence="1">Uncharacterized MFS-type transporter BMA10247_1907</fullName>
    </recommendedName>
</protein>
<accession>A3MMF8</accession>
<reference key="1">
    <citation type="journal article" date="2010" name="Genome Biol. Evol.">
        <title>Continuing evolution of Burkholderia mallei through genome reduction and large-scale rearrangements.</title>
        <authorList>
            <person name="Losada L."/>
            <person name="Ronning C.M."/>
            <person name="DeShazer D."/>
            <person name="Woods D."/>
            <person name="Fedorova N."/>
            <person name="Kim H.S."/>
            <person name="Shabalina S.A."/>
            <person name="Pearson T.R."/>
            <person name="Brinkac L."/>
            <person name="Tan P."/>
            <person name="Nandi T."/>
            <person name="Crabtree J."/>
            <person name="Badger J."/>
            <person name="Beckstrom-Sternberg S."/>
            <person name="Saqib M."/>
            <person name="Schutzer S.E."/>
            <person name="Keim P."/>
            <person name="Nierman W.C."/>
        </authorList>
    </citation>
    <scope>NUCLEOTIDE SEQUENCE [LARGE SCALE GENOMIC DNA]</scope>
    <source>
        <strain>NCTC 10247</strain>
    </source>
</reference>
<gene>
    <name type="ordered locus">BMA10247_1907</name>
</gene>
<name>Y4407_BURM7</name>
<feature type="chain" id="PRO_1000137227" description="Uncharacterized MFS-type transporter BMA10247_1907">
    <location>
        <begin position="1"/>
        <end position="407"/>
    </location>
</feature>
<feature type="transmembrane region" description="Helical" evidence="1">
    <location>
        <begin position="22"/>
        <end position="42"/>
    </location>
</feature>
<feature type="transmembrane region" description="Helical" evidence="1">
    <location>
        <begin position="51"/>
        <end position="71"/>
    </location>
</feature>
<feature type="transmembrane region" description="Helical" evidence="1">
    <location>
        <begin position="101"/>
        <end position="121"/>
    </location>
</feature>
<feature type="transmembrane region" description="Helical" evidence="1">
    <location>
        <begin position="126"/>
        <end position="146"/>
    </location>
</feature>
<feature type="transmembrane region" description="Helical" evidence="1">
    <location>
        <begin position="154"/>
        <end position="174"/>
    </location>
</feature>
<feature type="transmembrane region" description="Helical" evidence="1">
    <location>
        <begin position="179"/>
        <end position="199"/>
    </location>
</feature>
<feature type="transmembrane region" description="Helical" evidence="1">
    <location>
        <begin position="227"/>
        <end position="247"/>
    </location>
</feature>
<feature type="transmembrane region" description="Helical" evidence="1">
    <location>
        <begin position="258"/>
        <end position="278"/>
    </location>
</feature>
<feature type="transmembrane region" description="Helical" evidence="1">
    <location>
        <begin position="286"/>
        <end position="306"/>
    </location>
</feature>
<feature type="transmembrane region" description="Helical" evidence="1">
    <location>
        <begin position="309"/>
        <end position="329"/>
    </location>
</feature>
<feature type="transmembrane region" description="Helical" evidence="1">
    <location>
        <begin position="347"/>
        <end position="367"/>
    </location>
</feature>
<feature type="transmembrane region" description="Helical" evidence="1">
    <location>
        <begin position="369"/>
        <end position="389"/>
    </location>
</feature>
<proteinExistence type="inferred from homology"/>
<keyword id="KW-0997">Cell inner membrane</keyword>
<keyword id="KW-1003">Cell membrane</keyword>
<keyword id="KW-0472">Membrane</keyword>
<keyword id="KW-0812">Transmembrane</keyword>
<keyword id="KW-1133">Transmembrane helix</keyword>
<keyword id="KW-0813">Transport</keyword>
<organism>
    <name type="scientific">Burkholderia mallei (strain NCTC 10247)</name>
    <dbReference type="NCBI Taxonomy" id="320389"/>
    <lineage>
        <taxon>Bacteria</taxon>
        <taxon>Pseudomonadati</taxon>
        <taxon>Pseudomonadota</taxon>
        <taxon>Betaproteobacteria</taxon>
        <taxon>Burkholderiales</taxon>
        <taxon>Burkholderiaceae</taxon>
        <taxon>Burkholderia</taxon>
        <taxon>pseudomallei group</taxon>
    </lineage>
</organism>
<evidence type="ECO:0000255" key="1">
    <source>
        <dbReference type="HAMAP-Rule" id="MF_01118"/>
    </source>
</evidence>
<sequence>MSADSADSVPSPRSAFATTLQIVSVVSFTFICYLTIGLPLAVLPGFVHDELGFSAIVAGAAISVQYFATLASRPLAGRCADTLGPKRTVLRGLAACGASGALLLSAFAFARWPAASIGLLVASRLVLGIGESLVGTGAILWGIGRVGTAHNARVISWNGIATYGALAIGAPVGVAISHALIPAVLGMLVIALAALGYYLARLITPVPLVHGERMSYASVLTRVLPHGLGLALGSAGFGSIATFITLYYAARHWPNAALSLTVFGTLFIGARLLFANTIKTHGGFRVAIVSFAFECAGLLMLWLAPVPHVALVGAALTGFGFALIFPALGVEAVALVPPASRGAALSAYSVFLDLSLGITGPLAGYVAGAFGYPQVFLCAAVAAAAGVALSTVLYQRQARLSGSGAAA</sequence>
<dbReference type="EMBL" id="CP000548">
    <property type="protein sequence ID" value="ABO04791.1"/>
    <property type="molecule type" value="Genomic_DNA"/>
</dbReference>
<dbReference type="RefSeq" id="WP_004185668.1">
    <property type="nucleotide sequence ID" value="NZ_CP007802.1"/>
</dbReference>
<dbReference type="SMR" id="A3MMF8"/>
<dbReference type="KEGG" id="bmaz:BM44_1306"/>
<dbReference type="KEGG" id="bmn:BMA10247_1907"/>
<dbReference type="PATRIC" id="fig|320389.8.peg.1456"/>
<dbReference type="GO" id="GO:0005886">
    <property type="term" value="C:plasma membrane"/>
    <property type="evidence" value="ECO:0007669"/>
    <property type="project" value="UniProtKB-SubCell"/>
</dbReference>
<dbReference type="GO" id="GO:0022857">
    <property type="term" value="F:transmembrane transporter activity"/>
    <property type="evidence" value="ECO:0007669"/>
    <property type="project" value="UniProtKB-UniRule"/>
</dbReference>
<dbReference type="CDD" id="cd17489">
    <property type="entry name" value="MFS_YfcJ_like"/>
    <property type="match status" value="1"/>
</dbReference>
<dbReference type="Gene3D" id="1.20.1250.20">
    <property type="entry name" value="MFS general substrate transporter like domains"/>
    <property type="match status" value="1"/>
</dbReference>
<dbReference type="HAMAP" id="MF_01118">
    <property type="entry name" value="MFS_YhhS"/>
    <property type="match status" value="1"/>
</dbReference>
<dbReference type="InterPro" id="IPR011701">
    <property type="entry name" value="MFS"/>
</dbReference>
<dbReference type="InterPro" id="IPR020846">
    <property type="entry name" value="MFS_dom"/>
</dbReference>
<dbReference type="InterPro" id="IPR036259">
    <property type="entry name" value="MFS_trans_sf"/>
</dbReference>
<dbReference type="InterPro" id="IPR050171">
    <property type="entry name" value="MFS_Transporters"/>
</dbReference>
<dbReference type="InterPro" id="IPR023008">
    <property type="entry name" value="MFS_YhhS-like"/>
</dbReference>
<dbReference type="NCBIfam" id="NF003477">
    <property type="entry name" value="PRK05122.1"/>
    <property type="match status" value="1"/>
</dbReference>
<dbReference type="NCBIfam" id="NF009048">
    <property type="entry name" value="PRK12382.1"/>
    <property type="match status" value="1"/>
</dbReference>
<dbReference type="PANTHER" id="PTHR23517:SF13">
    <property type="entry name" value="MAJOR FACILITATOR SUPERFAMILY MFS_1"/>
    <property type="match status" value="1"/>
</dbReference>
<dbReference type="PANTHER" id="PTHR23517">
    <property type="entry name" value="RESISTANCE PROTEIN MDTM, PUTATIVE-RELATED-RELATED"/>
    <property type="match status" value="1"/>
</dbReference>
<dbReference type="Pfam" id="PF07690">
    <property type="entry name" value="MFS_1"/>
    <property type="match status" value="1"/>
</dbReference>
<dbReference type="SUPFAM" id="SSF103473">
    <property type="entry name" value="MFS general substrate transporter"/>
    <property type="match status" value="1"/>
</dbReference>
<dbReference type="PROSITE" id="PS50850">
    <property type="entry name" value="MFS"/>
    <property type="match status" value="1"/>
</dbReference>
<comment type="subcellular location">
    <subcellularLocation>
        <location evidence="1">Cell inner membrane</location>
        <topology evidence="1">Multi-pass membrane protein</topology>
    </subcellularLocation>
</comment>
<comment type="similarity">
    <text evidence="1">Belongs to the major facilitator superfamily. YhhS family.</text>
</comment>